<sequence length="398" mass="45075">MRKRTEPVALEHERCAAAGSSSSGSAAAALDADCRLKQNLRLTGTGAAEPRCAADAGMKRALGRRKGLWLRLRKILFCVLGLYIAIPFLIKLCPGIQAKLIFLNFVRVPYFIDLKKPQDQGLNHTCNYYLQPEEDVTIGVWHTVPAVWWKNAQGKDQMWYEDALASSHAIILYLHGNAGTRGGDHRVELYKVLSSLGYHVVTFDYRGWGDSVGTPSERGMTYDALHVFDWIKARSGDNPVYIWGHSLGTGVATNLVRRLCERETPPDALILESPFTNIREEAKSHPFSVIYRYFPGFDWFFLDPITSSGIKFANDENVKHISCPLLILHAEDDPVVPFQLGRKLYSIAAPARSFRDFKVQFVPFHSDLGYRHKYIYKSPELPRILREFLGKSEPEHQH</sequence>
<dbReference type="EC" id="3.1.-.-" evidence="1"/>
<dbReference type="EC" id="3.1.1.23" evidence="1"/>
<dbReference type="EMBL" id="AB168958">
    <property type="protein sequence ID" value="BAE01057.1"/>
    <property type="molecule type" value="mRNA"/>
</dbReference>
<dbReference type="RefSeq" id="NP_001271658.1">
    <property type="nucleotide sequence ID" value="NM_001284729.1"/>
</dbReference>
<dbReference type="RefSeq" id="XP_045218297.1">
    <property type="nucleotide sequence ID" value="XM_045362362.2"/>
</dbReference>
<dbReference type="SMR" id="Q4R766"/>
<dbReference type="STRING" id="9541.ENSMFAP00000006064"/>
<dbReference type="ESTHER" id="macfa-q4r766">
    <property type="family name" value="ABHD12-PHARC"/>
</dbReference>
<dbReference type="GlyCosmos" id="Q4R766">
    <property type="glycosylation" value="1 site, No reported glycans"/>
</dbReference>
<dbReference type="GeneID" id="101867434"/>
<dbReference type="VEuPathDB" id="HostDB:ENSMFAG00000002681"/>
<dbReference type="eggNOG" id="KOG1552">
    <property type="taxonomic scope" value="Eukaryota"/>
</dbReference>
<dbReference type="OMA" id="YELHNCL"/>
<dbReference type="Proteomes" id="UP000233100">
    <property type="component" value="Chromosome 10"/>
</dbReference>
<dbReference type="GO" id="GO:0005789">
    <property type="term" value="C:endoplasmic reticulum membrane"/>
    <property type="evidence" value="ECO:0000250"/>
    <property type="project" value="UniProtKB"/>
</dbReference>
<dbReference type="GO" id="GO:0016020">
    <property type="term" value="C:membrane"/>
    <property type="evidence" value="ECO:0000250"/>
    <property type="project" value="UniProtKB"/>
</dbReference>
<dbReference type="GO" id="GO:0004622">
    <property type="term" value="F:lysophospholipase activity"/>
    <property type="evidence" value="ECO:0000250"/>
    <property type="project" value="UniProtKB"/>
</dbReference>
<dbReference type="GO" id="GO:0047372">
    <property type="term" value="F:monoacylglycerol lipase activity"/>
    <property type="evidence" value="ECO:0000250"/>
    <property type="project" value="UniProtKB"/>
</dbReference>
<dbReference type="GO" id="GO:0004620">
    <property type="term" value="F:phospholipase activity"/>
    <property type="evidence" value="ECO:0000250"/>
    <property type="project" value="UniProtKB"/>
</dbReference>
<dbReference type="GO" id="GO:0046464">
    <property type="term" value="P:acylglycerol catabolic process"/>
    <property type="evidence" value="ECO:0000250"/>
    <property type="project" value="UniProtKB"/>
</dbReference>
<dbReference type="GO" id="GO:0052651">
    <property type="term" value="P:monoacylglycerol catabolic process"/>
    <property type="evidence" value="ECO:0000250"/>
    <property type="project" value="UniProtKB"/>
</dbReference>
<dbReference type="GO" id="GO:0006660">
    <property type="term" value="P:phosphatidylserine catabolic process"/>
    <property type="evidence" value="ECO:0000250"/>
    <property type="project" value="UniProtKB"/>
</dbReference>
<dbReference type="GO" id="GO:0009395">
    <property type="term" value="P:phospholipid catabolic process"/>
    <property type="evidence" value="ECO:0000250"/>
    <property type="project" value="UniProtKB"/>
</dbReference>
<dbReference type="FunFam" id="3.40.50.1820:FF:000069">
    <property type="entry name" value="monoacylglycerol lipase ABHD12"/>
    <property type="match status" value="1"/>
</dbReference>
<dbReference type="Gene3D" id="3.40.50.1820">
    <property type="entry name" value="alpha/beta hydrolase"/>
    <property type="match status" value="1"/>
</dbReference>
<dbReference type="InterPro" id="IPR000073">
    <property type="entry name" value="AB_hydrolase_1"/>
</dbReference>
<dbReference type="InterPro" id="IPR029058">
    <property type="entry name" value="AB_hydrolase_fold"/>
</dbReference>
<dbReference type="PANTHER" id="PTHR12277">
    <property type="entry name" value="ALPHA/BETA HYDROLASE DOMAIN-CONTAINING PROTEIN"/>
    <property type="match status" value="1"/>
</dbReference>
<dbReference type="PANTHER" id="PTHR12277:SF61">
    <property type="entry name" value="LYSOPHOSPHATIDYLSERINE LIPASE ABHD12"/>
    <property type="match status" value="1"/>
</dbReference>
<dbReference type="Pfam" id="PF00561">
    <property type="entry name" value="Abhydrolase_1"/>
    <property type="match status" value="1"/>
</dbReference>
<dbReference type="SUPFAM" id="SSF53474">
    <property type="entry name" value="alpha/beta-Hydrolases"/>
    <property type="match status" value="1"/>
</dbReference>
<reference key="1">
    <citation type="submission" date="2005-06" db="EMBL/GenBank/DDBJ databases">
        <title>DNA sequences of macaque genes expressed in brain or testis and its evolutionary implications.</title>
        <authorList>
            <consortium name="International consortium for macaque cDNA sequencing and analysis"/>
        </authorList>
    </citation>
    <scope>NUCLEOTIDE SEQUENCE [LARGE SCALE MRNA]</scope>
    <source>
        <tissue>Testis</tissue>
    </source>
</reference>
<evidence type="ECO:0000250" key="1">
    <source>
        <dbReference type="UniProtKB" id="Q8N2K0"/>
    </source>
</evidence>
<evidence type="ECO:0000250" key="2">
    <source>
        <dbReference type="UniProtKB" id="Q99LR1"/>
    </source>
</evidence>
<evidence type="ECO:0000255" key="3"/>
<evidence type="ECO:0000303" key="4">
    <source ref="1"/>
</evidence>
<evidence type="ECO:0000305" key="5"/>
<name>ABD12_MACFA</name>
<proteinExistence type="evidence at transcript level"/>
<comment type="function">
    <text evidence="1 2">Lysophosphatidylserine (LPS) lipase that mediates the hydrolysis of lysophosphatidylserine, a class of signaling lipids that regulates immunological and neurological processes (By similarity). Represents a major lysophosphatidylserine lipase in the brain, thereby playing a key role in the central nervous system (By similarity). Also able to hydrolyze oxidized phosphatidylserine; oxidized phosphatidylserine is produced in response to severe inflammatory stress and constitutes a proapoptotic 'eat me' signal. Also has monoacylglycerol (MAG) lipase activity: hydrolyzes 2-arachidonoylglycerol (2-AG), thereby acting as a regulator of endocannabinoid signaling pathways. Has a strong preference for very-long-chain lipid substrates; substrate specificity is likely due to improved catalysis and not improved substrate binding (By similarity).</text>
</comment>
<comment type="catalytic activity">
    <reaction evidence="1">
        <text>1-(9Z-octadecenoyl)-sn-glycero-3-phospho-L-serine + H2O = sn-glycero-3-phospho-L-serine + (9Z)-octadecenoate + H(+)</text>
        <dbReference type="Rhea" id="RHEA:40499"/>
        <dbReference type="ChEBI" id="CHEBI:15377"/>
        <dbReference type="ChEBI" id="CHEBI:15378"/>
        <dbReference type="ChEBI" id="CHEBI:30823"/>
        <dbReference type="ChEBI" id="CHEBI:64765"/>
        <dbReference type="ChEBI" id="CHEBI:74617"/>
    </reaction>
</comment>
<comment type="catalytic activity">
    <reaction evidence="2">
        <text>1-(9Z-octadecenoyl)-sn-glycero-3-phospho-(1'-sn-glycerol) + H2O = sn-glycero-3-phospho-(1'-sn-glycerol) + (9Z)-octadecenoate + H(+)</text>
        <dbReference type="Rhea" id="RHEA:44584"/>
        <dbReference type="ChEBI" id="CHEBI:15377"/>
        <dbReference type="ChEBI" id="CHEBI:15378"/>
        <dbReference type="ChEBI" id="CHEBI:30823"/>
        <dbReference type="ChEBI" id="CHEBI:64717"/>
        <dbReference type="ChEBI" id="CHEBI:72828"/>
    </reaction>
</comment>
<comment type="catalytic activity">
    <reaction evidence="2">
        <text>1-(9Z-octadecenoyl)-sn-glycero-3-phospho-(1D-myo-inositol) + H2O = sn-glycero-3-phospho-1D-myo-inositol + (9Z)-octadecenoate + H(+)</text>
        <dbReference type="Rhea" id="RHEA:44588"/>
        <dbReference type="ChEBI" id="CHEBI:15377"/>
        <dbReference type="ChEBI" id="CHEBI:15378"/>
        <dbReference type="ChEBI" id="CHEBI:30823"/>
        <dbReference type="ChEBI" id="CHEBI:58444"/>
        <dbReference type="ChEBI" id="CHEBI:78762"/>
    </reaction>
</comment>
<comment type="catalytic activity">
    <reaction evidence="2">
        <text>1-(9Z-octadecenoyl)-sn-glycero-3-phosphoethanolamine + H2O = sn-glycero-3-phosphoethanolamine + (9Z)-octadecenoate + H(+)</text>
        <dbReference type="Rhea" id="RHEA:40895"/>
        <dbReference type="ChEBI" id="CHEBI:15377"/>
        <dbReference type="ChEBI" id="CHEBI:15378"/>
        <dbReference type="ChEBI" id="CHEBI:30823"/>
        <dbReference type="ChEBI" id="CHEBI:74971"/>
        <dbReference type="ChEBI" id="CHEBI:143890"/>
    </reaction>
</comment>
<comment type="catalytic activity">
    <reaction evidence="2">
        <text>1-(9Z-octadecenoyl)-sn-glycero-3-phosphocholine + H2O = 1-(9Z-octadecenoyl)-sn-glycerol + phosphocholine + H(+)</text>
        <dbReference type="Rhea" id="RHEA:41091"/>
        <dbReference type="ChEBI" id="CHEBI:15377"/>
        <dbReference type="ChEBI" id="CHEBI:15378"/>
        <dbReference type="ChEBI" id="CHEBI:28610"/>
        <dbReference type="ChEBI" id="CHEBI:75757"/>
        <dbReference type="ChEBI" id="CHEBI:295975"/>
    </reaction>
</comment>
<comment type="catalytic activity">
    <reaction evidence="1">
        <text>2-(9Z-octadecenoyl)-glycerol + H2O = glycerol + (9Z)-octadecenoate + H(+)</text>
        <dbReference type="Rhea" id="RHEA:38491"/>
        <dbReference type="ChEBI" id="CHEBI:15377"/>
        <dbReference type="ChEBI" id="CHEBI:15378"/>
        <dbReference type="ChEBI" id="CHEBI:17754"/>
        <dbReference type="ChEBI" id="CHEBI:30823"/>
        <dbReference type="ChEBI" id="CHEBI:73990"/>
    </reaction>
</comment>
<comment type="catalytic activity">
    <reaction evidence="1">
        <text>1-hexadecanoyl-sn-glycero-3-phospho-L-serine + H2O = sn-glycero-3-phospho-L-serine + hexadecanoate + H(+)</text>
        <dbReference type="Rhea" id="RHEA:44552"/>
        <dbReference type="ChEBI" id="CHEBI:7896"/>
        <dbReference type="ChEBI" id="CHEBI:15377"/>
        <dbReference type="ChEBI" id="CHEBI:15378"/>
        <dbReference type="ChEBI" id="CHEBI:64765"/>
        <dbReference type="ChEBI" id="CHEBI:75020"/>
    </reaction>
</comment>
<comment type="catalytic activity">
    <reaction evidence="1">
        <text>2-(5Z,8Z,11Z,14Z-eicosatetraenoyl)-glycerol + H2O = glycerol + (5Z,8Z,11Z,14Z)-eicosatetraenoate + H(+)</text>
        <dbReference type="Rhea" id="RHEA:26132"/>
        <dbReference type="ChEBI" id="CHEBI:15377"/>
        <dbReference type="ChEBI" id="CHEBI:15378"/>
        <dbReference type="ChEBI" id="CHEBI:17754"/>
        <dbReference type="ChEBI" id="CHEBI:32395"/>
        <dbReference type="ChEBI" id="CHEBI:52392"/>
    </reaction>
</comment>
<comment type="catalytic activity">
    <reaction evidence="1">
        <text>Hydrolyzes glycerol monoesters of long-chain fatty acids.</text>
        <dbReference type="EC" id="3.1.1.23"/>
    </reaction>
</comment>
<comment type="catalytic activity">
    <reaction evidence="1">
        <text>1-decanoylglycerol + H2O = decanoate + glycerol + H(+)</text>
        <dbReference type="Rhea" id="RHEA:44320"/>
        <dbReference type="ChEBI" id="CHEBI:15377"/>
        <dbReference type="ChEBI" id="CHEBI:15378"/>
        <dbReference type="ChEBI" id="CHEBI:17754"/>
        <dbReference type="ChEBI" id="CHEBI:27689"/>
        <dbReference type="ChEBI" id="CHEBI:75547"/>
    </reaction>
</comment>
<comment type="catalytic activity">
    <reaction evidence="1">
        <text>1-dodecanoylglycerol + H2O = dodecanoate + glycerol + H(+)</text>
        <dbReference type="Rhea" id="RHEA:44316"/>
        <dbReference type="ChEBI" id="CHEBI:15377"/>
        <dbReference type="ChEBI" id="CHEBI:15378"/>
        <dbReference type="ChEBI" id="CHEBI:17754"/>
        <dbReference type="ChEBI" id="CHEBI:18262"/>
        <dbReference type="ChEBI" id="CHEBI:75539"/>
    </reaction>
</comment>
<comment type="catalytic activity">
    <reaction evidence="1">
        <text>1-tetradecanoylglycerol + H2O = tetradecanoate + glycerol + H(+)</text>
        <dbReference type="Rhea" id="RHEA:44312"/>
        <dbReference type="ChEBI" id="CHEBI:15377"/>
        <dbReference type="ChEBI" id="CHEBI:15378"/>
        <dbReference type="ChEBI" id="CHEBI:17754"/>
        <dbReference type="ChEBI" id="CHEBI:30807"/>
        <dbReference type="ChEBI" id="CHEBI:75562"/>
    </reaction>
</comment>
<comment type="catalytic activity">
    <reaction evidence="1">
        <text>2-hexadecanoylglycerol + H2O = glycerol + hexadecanoate + H(+)</text>
        <dbReference type="Rhea" id="RHEA:39963"/>
        <dbReference type="ChEBI" id="CHEBI:7896"/>
        <dbReference type="ChEBI" id="CHEBI:15377"/>
        <dbReference type="ChEBI" id="CHEBI:15378"/>
        <dbReference type="ChEBI" id="CHEBI:17754"/>
        <dbReference type="ChEBI" id="CHEBI:75455"/>
    </reaction>
</comment>
<comment type="catalytic activity">
    <reaction evidence="1">
        <text>1-(9Z-octadecenoyl)-glycerol + H2O = glycerol + (9Z)-octadecenoate + H(+)</text>
        <dbReference type="Rhea" id="RHEA:38487"/>
        <dbReference type="ChEBI" id="CHEBI:15377"/>
        <dbReference type="ChEBI" id="CHEBI:15378"/>
        <dbReference type="ChEBI" id="CHEBI:17754"/>
        <dbReference type="ChEBI" id="CHEBI:30823"/>
        <dbReference type="ChEBI" id="CHEBI:75342"/>
    </reaction>
</comment>
<comment type="catalytic activity">
    <reaction evidence="1">
        <text>2-(9Z,12Z-octadecadienoyl)-glycerol + H2O = (9Z,12Z)-octadecadienoate + glycerol + H(+)</text>
        <dbReference type="Rhea" id="RHEA:44732"/>
        <dbReference type="ChEBI" id="CHEBI:15377"/>
        <dbReference type="ChEBI" id="CHEBI:15378"/>
        <dbReference type="ChEBI" id="CHEBI:17754"/>
        <dbReference type="ChEBI" id="CHEBI:30245"/>
        <dbReference type="ChEBI" id="CHEBI:75457"/>
    </reaction>
</comment>
<comment type="catalytic activity">
    <reaction evidence="1">
        <text>1-(5Z,8Z,11Z,14Z-eicosatetraenoyl)-glycerol + H2O = glycerol + (5Z,8Z,11Z,14Z)-eicosatetraenoate + H(+)</text>
        <dbReference type="Rhea" id="RHEA:44728"/>
        <dbReference type="ChEBI" id="CHEBI:15377"/>
        <dbReference type="ChEBI" id="CHEBI:15378"/>
        <dbReference type="ChEBI" id="CHEBI:17754"/>
        <dbReference type="ChEBI" id="CHEBI:32395"/>
        <dbReference type="ChEBI" id="CHEBI:75612"/>
    </reaction>
</comment>
<comment type="catalytic activity">
    <reaction evidence="1">
        <text>1-(9Z,12Z-octadecadienoyl)-glycerol + H2O = (9Z,12Z)-octadecadienoate + glycerol + H(+)</text>
        <dbReference type="Rhea" id="RHEA:48428"/>
        <dbReference type="ChEBI" id="CHEBI:15377"/>
        <dbReference type="ChEBI" id="CHEBI:15378"/>
        <dbReference type="ChEBI" id="CHEBI:17754"/>
        <dbReference type="ChEBI" id="CHEBI:30245"/>
        <dbReference type="ChEBI" id="CHEBI:75568"/>
    </reaction>
</comment>
<comment type="catalytic activity">
    <reaction evidence="1">
        <text>1-hexadecanoylglycerol + H2O = glycerol + hexadecanoate + H(+)</text>
        <dbReference type="Rhea" id="RHEA:39959"/>
        <dbReference type="ChEBI" id="CHEBI:7896"/>
        <dbReference type="ChEBI" id="CHEBI:15377"/>
        <dbReference type="ChEBI" id="CHEBI:15378"/>
        <dbReference type="ChEBI" id="CHEBI:17754"/>
        <dbReference type="ChEBI" id="CHEBI:69081"/>
    </reaction>
</comment>
<comment type="catalytic activity">
    <reaction evidence="1">
        <text>1-octadecanoylglycerol + H2O = octadecanoate + glycerol + H(+)</text>
        <dbReference type="Rhea" id="RHEA:38363"/>
        <dbReference type="ChEBI" id="CHEBI:15377"/>
        <dbReference type="ChEBI" id="CHEBI:15378"/>
        <dbReference type="ChEBI" id="CHEBI:17754"/>
        <dbReference type="ChEBI" id="CHEBI:25629"/>
        <dbReference type="ChEBI" id="CHEBI:75555"/>
    </reaction>
</comment>
<comment type="catalytic activity">
    <reaction evidence="1">
        <text>1-octadecanoyl-2-(9,10-epoxyoctadecanoyl)-sn-glycero-3-phospho-L-serine + H2O = 9,10-epoxyoctadecanoate + 1-octadecanoyl-sn-glycero-3-phosphoserine + H(+)</text>
        <dbReference type="Rhea" id="RHEA:59364"/>
        <dbReference type="ChEBI" id="CHEBI:15377"/>
        <dbReference type="ChEBI" id="CHEBI:15378"/>
        <dbReference type="ChEBI" id="CHEBI:84467"/>
        <dbReference type="ChEBI" id="CHEBI:85195"/>
        <dbReference type="ChEBI" id="CHEBI:143087"/>
    </reaction>
</comment>
<comment type="catalytic activity">
    <reaction evidence="1">
        <text>1-octadecanoyl-2-(10-hydroxyoctadecanoyl)-sn-glycero-3-phospho-L-serine + H2O = 1-octadecanoyl-sn-glycero-3-phosphoserine + 10-hydroxyoctadecanoate + H(+)</text>
        <dbReference type="Rhea" id="RHEA:59368"/>
        <dbReference type="ChEBI" id="CHEBI:15377"/>
        <dbReference type="ChEBI" id="CHEBI:15378"/>
        <dbReference type="ChEBI" id="CHEBI:84467"/>
        <dbReference type="ChEBI" id="CHEBI:143088"/>
        <dbReference type="ChEBI" id="CHEBI:143089"/>
    </reaction>
</comment>
<comment type="catalytic activity">
    <reaction evidence="1">
        <text>1-hexadecanoyl-2-(10-hydroxyoctadecanoyl)-sn-glycero-3-phospho-L-serine + H2O = 10-hydroxyoctadecanoate + 1-hexadecanoyl-sn-glycero-3-phospho-L-serine + H(+)</text>
        <dbReference type="Rhea" id="RHEA:59372"/>
        <dbReference type="ChEBI" id="CHEBI:15377"/>
        <dbReference type="ChEBI" id="CHEBI:15378"/>
        <dbReference type="ChEBI" id="CHEBI:75020"/>
        <dbReference type="ChEBI" id="CHEBI:143089"/>
        <dbReference type="ChEBI" id="CHEBI:143094"/>
    </reaction>
</comment>
<comment type="subcellular location">
    <subcellularLocation>
        <location evidence="1">Endoplasmic reticulum membrane</location>
        <topology evidence="3">Single-pass membrane protein</topology>
    </subcellularLocation>
</comment>
<comment type="similarity">
    <text evidence="5">Belongs to the serine esterase family.</text>
</comment>
<feature type="chain" id="PRO_0000375808" description="Lysophosphatidylserine lipase ABHD12">
    <location>
        <begin position="1"/>
        <end position="398"/>
    </location>
</feature>
<feature type="topological domain" description="Cytoplasmic" evidence="2">
    <location>
        <begin position="1"/>
        <end position="74"/>
    </location>
</feature>
<feature type="transmembrane region" description="Helical" evidence="2">
    <location>
        <begin position="75"/>
        <end position="95"/>
    </location>
</feature>
<feature type="topological domain" description="Extracellular" evidence="2">
    <location>
        <begin position="96"/>
        <end position="398"/>
    </location>
</feature>
<feature type="active site" description="Nucleophile" evidence="1">
    <location>
        <position position="246"/>
    </location>
</feature>
<feature type="active site" description="Charge relay system" evidence="1">
    <location>
        <position position="333"/>
    </location>
</feature>
<feature type="active site" description="Charge relay system" evidence="1">
    <location>
        <position position="372"/>
    </location>
</feature>
<feature type="glycosylation site" description="N-linked (GlcNAc...) asparagine" evidence="3">
    <location>
        <position position="123"/>
    </location>
</feature>
<keyword id="KW-0256">Endoplasmic reticulum</keyword>
<keyword id="KW-0325">Glycoprotein</keyword>
<keyword id="KW-0378">Hydrolase</keyword>
<keyword id="KW-0443">Lipid metabolism</keyword>
<keyword id="KW-0472">Membrane</keyword>
<keyword id="KW-1185">Reference proteome</keyword>
<keyword id="KW-0812">Transmembrane</keyword>
<keyword id="KW-1133">Transmembrane helix</keyword>
<protein>
    <recommendedName>
        <fullName evidence="5">Lysophosphatidylserine lipase ABHD12</fullName>
        <ecNumber evidence="1">3.1.-.-</ecNumber>
    </recommendedName>
    <alternativeName>
        <fullName evidence="5">2-arachidonoylglycerol hydrolase ABHD12</fullName>
    </alternativeName>
    <alternativeName>
        <fullName evidence="5">Abhydrolase domain-containing protein 12</fullName>
    </alternativeName>
    <alternativeName>
        <fullName evidence="5">Monoacylglycerol lipase ABHD12</fullName>
        <ecNumber evidence="1">3.1.1.23</ecNumber>
    </alternativeName>
    <alternativeName>
        <fullName evidence="5">Oxidized phosphatidylserine lipase ABHD12</fullName>
        <ecNumber evidence="1">3.1.-.-</ecNumber>
    </alternativeName>
</protein>
<organism>
    <name type="scientific">Macaca fascicularis</name>
    <name type="common">Crab-eating macaque</name>
    <name type="synonym">Cynomolgus monkey</name>
    <dbReference type="NCBI Taxonomy" id="9541"/>
    <lineage>
        <taxon>Eukaryota</taxon>
        <taxon>Metazoa</taxon>
        <taxon>Chordata</taxon>
        <taxon>Craniata</taxon>
        <taxon>Vertebrata</taxon>
        <taxon>Euteleostomi</taxon>
        <taxon>Mammalia</taxon>
        <taxon>Eutheria</taxon>
        <taxon>Euarchontoglires</taxon>
        <taxon>Primates</taxon>
        <taxon>Haplorrhini</taxon>
        <taxon>Catarrhini</taxon>
        <taxon>Cercopithecidae</taxon>
        <taxon>Cercopithecinae</taxon>
        <taxon>Macaca</taxon>
    </lineage>
</organism>
<accession>Q4R766</accession>
<gene>
    <name evidence="1" type="primary">ABHD12</name>
    <name evidence="4" type="ORF">QtsA-16132</name>
</gene>